<gene>
    <name type="primary">NCS1</name>
    <name type="synonym">FREQ</name>
</gene>
<organism>
    <name type="scientific">Bos taurus</name>
    <name type="common">Bovine</name>
    <dbReference type="NCBI Taxonomy" id="9913"/>
    <lineage>
        <taxon>Eukaryota</taxon>
        <taxon>Metazoa</taxon>
        <taxon>Chordata</taxon>
        <taxon>Craniata</taxon>
        <taxon>Vertebrata</taxon>
        <taxon>Euteleostomi</taxon>
        <taxon>Mammalia</taxon>
        <taxon>Eutheria</taxon>
        <taxon>Laurasiatheria</taxon>
        <taxon>Artiodactyla</taxon>
        <taxon>Ruminantia</taxon>
        <taxon>Pecora</taxon>
        <taxon>Bovidae</taxon>
        <taxon>Bovinae</taxon>
        <taxon>Bos</taxon>
    </lineage>
</organism>
<evidence type="ECO:0000250" key="1"/>
<evidence type="ECO:0000250" key="2">
    <source>
        <dbReference type="UniProtKB" id="P62166"/>
    </source>
</evidence>
<evidence type="ECO:0000250" key="3">
    <source>
        <dbReference type="UniProtKB" id="P62168"/>
    </source>
</evidence>
<evidence type="ECO:0000255" key="4">
    <source>
        <dbReference type="PROSITE-ProRule" id="PRU00448"/>
    </source>
</evidence>
<evidence type="ECO:0000269" key="5">
    <source>
    </source>
</evidence>
<evidence type="ECO:0000305" key="6"/>
<feature type="initiator methionine" description="Removed" evidence="2">
    <location>
        <position position="1"/>
    </location>
</feature>
<feature type="chain" id="PRO_0000269462" description="Neuronal calcium sensor 1">
    <location>
        <begin position="2"/>
        <end position="190"/>
    </location>
</feature>
<feature type="domain" description="EF-hand 1" evidence="6">
    <location>
        <begin position="24"/>
        <end position="59"/>
    </location>
</feature>
<feature type="domain" description="EF-hand 2" evidence="4">
    <location>
        <begin position="60"/>
        <end position="95"/>
    </location>
</feature>
<feature type="domain" description="EF-hand 3" evidence="4">
    <location>
        <begin position="96"/>
        <end position="131"/>
    </location>
</feature>
<feature type="domain" description="EF-hand 4" evidence="4">
    <location>
        <begin position="144"/>
        <end position="179"/>
    </location>
</feature>
<feature type="region of interest" description="Interaction with IL1RAPL1" evidence="2">
    <location>
        <begin position="174"/>
        <end position="190"/>
    </location>
</feature>
<feature type="binding site" evidence="4">
    <location>
        <position position="73"/>
    </location>
    <ligand>
        <name>Ca(2+)</name>
        <dbReference type="ChEBI" id="CHEBI:29108"/>
        <label>1</label>
    </ligand>
</feature>
<feature type="binding site" evidence="4">
    <location>
        <position position="75"/>
    </location>
    <ligand>
        <name>Ca(2+)</name>
        <dbReference type="ChEBI" id="CHEBI:29108"/>
        <label>1</label>
    </ligand>
</feature>
<feature type="binding site" evidence="4">
    <location>
        <position position="77"/>
    </location>
    <ligand>
        <name>Ca(2+)</name>
        <dbReference type="ChEBI" id="CHEBI:29108"/>
        <label>1</label>
    </ligand>
</feature>
<feature type="binding site" evidence="4">
    <location>
        <position position="79"/>
    </location>
    <ligand>
        <name>Ca(2+)</name>
        <dbReference type="ChEBI" id="CHEBI:29108"/>
        <label>1</label>
    </ligand>
</feature>
<feature type="binding site" evidence="3">
    <location>
        <position position="81"/>
    </location>
    <ligand>
        <name>Ca(2+)</name>
        <dbReference type="ChEBI" id="CHEBI:29108"/>
        <label>1</label>
    </ligand>
</feature>
<feature type="binding site" evidence="4">
    <location>
        <position position="84"/>
    </location>
    <ligand>
        <name>Ca(2+)</name>
        <dbReference type="ChEBI" id="CHEBI:29108"/>
        <label>1</label>
    </ligand>
</feature>
<feature type="binding site" evidence="4">
    <location>
        <position position="109"/>
    </location>
    <ligand>
        <name>Ca(2+)</name>
        <dbReference type="ChEBI" id="CHEBI:29108"/>
        <label>2</label>
    </ligand>
</feature>
<feature type="binding site" evidence="4">
    <location>
        <position position="111"/>
    </location>
    <ligand>
        <name>Ca(2+)</name>
        <dbReference type="ChEBI" id="CHEBI:29108"/>
        <label>2</label>
    </ligand>
</feature>
<feature type="binding site" evidence="4">
    <location>
        <position position="113"/>
    </location>
    <ligand>
        <name>Ca(2+)</name>
        <dbReference type="ChEBI" id="CHEBI:29108"/>
        <label>2</label>
    </ligand>
</feature>
<feature type="binding site" evidence="4">
    <location>
        <position position="115"/>
    </location>
    <ligand>
        <name>Ca(2+)</name>
        <dbReference type="ChEBI" id="CHEBI:29108"/>
        <label>2</label>
    </ligand>
</feature>
<feature type="binding site" evidence="4">
    <location>
        <position position="120"/>
    </location>
    <ligand>
        <name>Ca(2+)</name>
        <dbReference type="ChEBI" id="CHEBI:29108"/>
        <label>2</label>
    </ligand>
</feature>
<feature type="binding site" evidence="4">
    <location>
        <position position="157"/>
    </location>
    <ligand>
        <name>Ca(2+)</name>
        <dbReference type="ChEBI" id="CHEBI:29108"/>
        <label>3</label>
    </ligand>
</feature>
<feature type="binding site" evidence="4">
    <location>
        <position position="159"/>
    </location>
    <ligand>
        <name>Ca(2+)</name>
        <dbReference type="ChEBI" id="CHEBI:29108"/>
        <label>3</label>
    </ligand>
</feature>
<feature type="binding site" evidence="4">
    <location>
        <position position="161"/>
    </location>
    <ligand>
        <name>Ca(2+)</name>
        <dbReference type="ChEBI" id="CHEBI:29108"/>
        <label>3</label>
    </ligand>
</feature>
<feature type="binding site" evidence="4">
    <location>
        <position position="163"/>
    </location>
    <ligand>
        <name>Ca(2+)</name>
        <dbReference type="ChEBI" id="CHEBI:29108"/>
        <label>3</label>
    </ligand>
</feature>
<feature type="binding site" evidence="4">
    <location>
        <position position="168"/>
    </location>
    <ligand>
        <name>Ca(2+)</name>
        <dbReference type="ChEBI" id="CHEBI:29108"/>
        <label>3</label>
    </ligand>
</feature>
<feature type="lipid moiety-binding region" description="N-myristoyl glycine" evidence="2">
    <location>
        <position position="2"/>
    </location>
</feature>
<keyword id="KW-0106">Calcium</keyword>
<keyword id="KW-1003">Cell membrane</keyword>
<keyword id="KW-0963">Cytoplasm</keyword>
<keyword id="KW-0333">Golgi apparatus</keyword>
<keyword id="KW-0449">Lipoprotein</keyword>
<keyword id="KW-0472">Membrane</keyword>
<keyword id="KW-0479">Metal-binding</keyword>
<keyword id="KW-0519">Myristate</keyword>
<keyword id="KW-1185">Reference proteome</keyword>
<keyword id="KW-0677">Repeat</keyword>
<keyword id="KW-0770">Synapse</keyword>
<reference key="1">
    <citation type="submission" date="2005-11" db="EMBL/GenBank/DDBJ databases">
        <title>Novel Ca2+-modulated frequenin-ROS-GC transduction machinery in bovine hippocampus.</title>
        <authorList>
            <person name="Fik-Rymarkiewicz E."/>
            <person name="Duda T."/>
            <person name="Sharma R.K."/>
        </authorList>
    </citation>
    <scope>NUCLEOTIDE SEQUENCE [MRNA]</scope>
</reference>
<reference key="2">
    <citation type="journal article" date="2001" name="J. Biol. Chem.">
        <title>Interaction of neuronal calcium sensor-1 (NCS-1) with phosphatidylinositol 4-kinase beta stimulates lipid kinase activity and affects membrane trafficking in COS-7 cells.</title>
        <authorList>
            <person name="Zhao X."/>
            <person name="Varnai P."/>
            <person name="Tuymetova G."/>
            <person name="Balla A."/>
            <person name="Toth Z.E."/>
            <person name="Oker-Blom C."/>
            <person name="Roder J."/>
            <person name="Jeromin A."/>
            <person name="Balla T."/>
        </authorList>
    </citation>
    <scope>INTERACTION WITH PI4KB</scope>
    <scope>SUBCELLULAR LOCATION</scope>
</reference>
<protein>
    <recommendedName>
        <fullName>Neuronal calcium sensor 1</fullName>
        <shortName>NCS-1</shortName>
    </recommendedName>
    <alternativeName>
        <fullName>Frequenin homolog</fullName>
    </alternativeName>
</protein>
<accession>Q2V8Y7</accession>
<proteinExistence type="evidence at protein level"/>
<dbReference type="EMBL" id="DQ284984">
    <property type="protein sequence ID" value="ABB88851.1"/>
    <property type="molecule type" value="mRNA"/>
</dbReference>
<dbReference type="RefSeq" id="NP_001035637.1">
    <property type="nucleotide sequence ID" value="NM_001040547.1"/>
</dbReference>
<dbReference type="BMRB" id="Q2V8Y7"/>
<dbReference type="SMR" id="Q2V8Y7"/>
<dbReference type="BioGRID" id="183155">
    <property type="interactions" value="1"/>
</dbReference>
<dbReference type="FunCoup" id="Q2V8Y7">
    <property type="interactions" value="130"/>
</dbReference>
<dbReference type="STRING" id="9913.ENSBTAP00000011496"/>
<dbReference type="PaxDb" id="9913-ENSBTAP00000011496"/>
<dbReference type="GeneID" id="526544"/>
<dbReference type="CTD" id="23413"/>
<dbReference type="eggNOG" id="KOG0044">
    <property type="taxonomic scope" value="Eukaryota"/>
</dbReference>
<dbReference type="InParanoid" id="Q2V8Y7"/>
<dbReference type="OrthoDB" id="191686at2759"/>
<dbReference type="Proteomes" id="UP000009136">
    <property type="component" value="Unplaced"/>
</dbReference>
<dbReference type="GO" id="GO:0005794">
    <property type="term" value="C:Golgi apparatus"/>
    <property type="evidence" value="ECO:0007669"/>
    <property type="project" value="UniProtKB-SubCell"/>
</dbReference>
<dbReference type="GO" id="GO:0048471">
    <property type="term" value="C:perinuclear region of cytoplasm"/>
    <property type="evidence" value="ECO:0007669"/>
    <property type="project" value="UniProtKB-SubCell"/>
</dbReference>
<dbReference type="GO" id="GO:0005886">
    <property type="term" value="C:plasma membrane"/>
    <property type="evidence" value="ECO:0007669"/>
    <property type="project" value="UniProtKB-SubCell"/>
</dbReference>
<dbReference type="GO" id="GO:0014069">
    <property type="term" value="C:postsynaptic density"/>
    <property type="evidence" value="ECO:0007669"/>
    <property type="project" value="UniProtKB-SubCell"/>
</dbReference>
<dbReference type="GO" id="GO:0005509">
    <property type="term" value="F:calcium ion binding"/>
    <property type="evidence" value="ECO:0000318"/>
    <property type="project" value="GO_Central"/>
</dbReference>
<dbReference type="GO" id="GO:0008048">
    <property type="term" value="F:calcium sensitive guanylate cyclase activator activity"/>
    <property type="evidence" value="ECO:0000318"/>
    <property type="project" value="GO_Central"/>
</dbReference>
<dbReference type="GO" id="GO:0005245">
    <property type="term" value="F:voltage-gated calcium channel activity"/>
    <property type="evidence" value="ECO:0000250"/>
    <property type="project" value="UniProtKB"/>
</dbReference>
<dbReference type="GO" id="GO:0010975">
    <property type="term" value="P:regulation of neuron projection development"/>
    <property type="evidence" value="ECO:0000250"/>
    <property type="project" value="UniProtKB"/>
</dbReference>
<dbReference type="GO" id="GO:0009966">
    <property type="term" value="P:regulation of signal transduction"/>
    <property type="evidence" value="ECO:0000318"/>
    <property type="project" value="GO_Central"/>
</dbReference>
<dbReference type="CDD" id="cd00051">
    <property type="entry name" value="EFh"/>
    <property type="match status" value="2"/>
</dbReference>
<dbReference type="FunFam" id="1.10.238.10:FF:000009">
    <property type="entry name" value="Visinin-like protein 1"/>
    <property type="match status" value="1"/>
</dbReference>
<dbReference type="Gene3D" id="1.10.238.10">
    <property type="entry name" value="EF-hand"/>
    <property type="match status" value="1"/>
</dbReference>
<dbReference type="InterPro" id="IPR011992">
    <property type="entry name" value="EF-hand-dom_pair"/>
</dbReference>
<dbReference type="InterPro" id="IPR018247">
    <property type="entry name" value="EF_Hand_1_Ca_BS"/>
</dbReference>
<dbReference type="InterPro" id="IPR002048">
    <property type="entry name" value="EF_hand_dom"/>
</dbReference>
<dbReference type="InterPro" id="IPR028846">
    <property type="entry name" value="Recoverin"/>
</dbReference>
<dbReference type="PANTHER" id="PTHR23055">
    <property type="entry name" value="CALCIUM BINDING PROTEINS"/>
    <property type="match status" value="1"/>
</dbReference>
<dbReference type="PANTHER" id="PTHR23055:SF198">
    <property type="entry name" value="NEURONAL CALCIUM SENSOR 1"/>
    <property type="match status" value="1"/>
</dbReference>
<dbReference type="Pfam" id="PF00036">
    <property type="entry name" value="EF-hand_1"/>
    <property type="match status" value="1"/>
</dbReference>
<dbReference type="Pfam" id="PF13499">
    <property type="entry name" value="EF-hand_7"/>
    <property type="match status" value="1"/>
</dbReference>
<dbReference type="PRINTS" id="PR00450">
    <property type="entry name" value="RECOVERIN"/>
</dbReference>
<dbReference type="SMART" id="SM00054">
    <property type="entry name" value="EFh"/>
    <property type="match status" value="3"/>
</dbReference>
<dbReference type="SUPFAM" id="SSF47473">
    <property type="entry name" value="EF-hand"/>
    <property type="match status" value="1"/>
</dbReference>
<dbReference type="PROSITE" id="PS00018">
    <property type="entry name" value="EF_HAND_1"/>
    <property type="match status" value="3"/>
</dbReference>
<dbReference type="PROSITE" id="PS50222">
    <property type="entry name" value="EF_HAND_2"/>
    <property type="match status" value="3"/>
</dbReference>
<name>NCS1_BOVIN</name>
<comment type="function">
    <text evidence="1">Neuronal calcium sensor, regulator of G protein-coupled receptor phosphorylation in a calcium dependent manner. Directly regulates GRK1 (RHOK), but not GRK2 to GRK5. Can substitute for calmodulin (By similarity). Stimulates PI4KB kinase activity (By similarity). Involved in long-term synaptic plasticity through its interaction with PICK1 (By similarity). May also play a role in neuron differentiation through inhibition of the activity of N-type voltage-gated calcium channel (By similarity).</text>
</comment>
<comment type="subunit">
    <text evidence="2 3 5">Monomer (By similarity). Interacts with KCND2 (By similarity). Interacts in a calcium-independent manner with PI4KB, but only if myristoylated (PubMed:11526106). This binding competes with CALN2/CABP7 binding to PI4KB (PubMed:11526106). Interacts in a calcium-dependent manner with PICK1 (via AH domain) (By similarity). Interacts with ARF1, ARF3, ARF5 and ARF6 (By similarity). Interacts with IL1RAPL1 (By similarity). Interacts with RIC8A; interaction is favored in the absence of Ca(2+) and myristoylation of NCS1 is not required (By similarity).</text>
</comment>
<comment type="subcellular location">
    <subcellularLocation>
        <location evidence="2">Golgi apparatus</location>
    </subcellularLocation>
    <subcellularLocation>
        <location evidence="2">Postsynaptic density</location>
    </subcellularLocation>
    <subcellularLocation>
        <location evidence="2">Cytoplasm</location>
        <location evidence="2">Perinuclear region</location>
    </subcellularLocation>
    <subcellularLocation>
        <location evidence="3">Cytoplasm</location>
    </subcellularLocation>
    <subcellularLocation>
        <location evidence="2">Cell membrane</location>
        <topology evidence="2">Peripheral membrane protein</topology>
    </subcellularLocation>
    <subcellularLocation>
        <location evidence="3">Membrane</location>
        <topology evidence="2">Lipid-anchor</topology>
    </subcellularLocation>
    <text evidence="2">Associated with Golgi stacks. Post-synaptic densities of dendrites, and in the pre-synaptic nerve terminal at neuromuscular junctions.</text>
</comment>
<comment type="miscellaneous">
    <text evidence="1">Binds 3 calcium ions via the second, third and fourth EF-hand.</text>
</comment>
<comment type="similarity">
    <text evidence="6">Belongs to the recoverin family.</text>
</comment>
<sequence length="190" mass="21833">MGKSNSKLKPEVVEELTRKTYFTEKEVQQWYKGFIKDCPSGQLDAAGFQKIYKQFFPFGDPTKFATFVFNVFDENKDGRIEFSEFIQALSVTSRGTLDEKLRWASKLYDLDNDGYITRNEMLDIVDAIYQMVGNTVELPEEENTPEKRVDRIFAMMDKNADGKLTLQEFQEGTKADPSIVQALSLYDGLV</sequence>